<gene>
    <name type="ordered locus">CBUD_1993</name>
</gene>
<keyword id="KW-0547">Nucleotide-binding</keyword>
<proteinExistence type="inferred from homology"/>
<accession>A9KET4</accession>
<sequence>MPSFDIQSELNKHEVSNAVDQANREVATRFDFKGSGATYKYEGNSITLQAETDFQLKQMIDILQNKFAKRQIDVAHMKLEDPIIQHKSAQQTVMLLEGIDQTAAKKIIKLIKDQKLKVQAAIQGEKVRVTGKKRDDLQSVIGLLKEQEIGLPLQFDNFRD</sequence>
<name>Y1993_COXBN</name>
<protein>
    <recommendedName>
        <fullName evidence="1">Nucleotide-binding protein CBUD_1993</fullName>
    </recommendedName>
</protein>
<reference key="1">
    <citation type="journal article" date="2009" name="Infect. Immun.">
        <title>Comparative genomics reveal extensive transposon-mediated genomic plasticity and diversity among potential effector proteins within the genus Coxiella.</title>
        <authorList>
            <person name="Beare P.A."/>
            <person name="Unsworth N."/>
            <person name="Andoh M."/>
            <person name="Voth D.E."/>
            <person name="Omsland A."/>
            <person name="Gilk S.D."/>
            <person name="Williams K.P."/>
            <person name="Sobral B.W."/>
            <person name="Kupko J.J. III"/>
            <person name="Porcella S.F."/>
            <person name="Samuel J.E."/>
            <person name="Heinzen R.A."/>
        </authorList>
    </citation>
    <scope>NUCLEOTIDE SEQUENCE [LARGE SCALE GENOMIC DNA]</scope>
    <source>
        <strain>Dugway 5J108-111</strain>
    </source>
</reference>
<comment type="function">
    <text evidence="1">Nucleotide-binding protein.</text>
</comment>
<comment type="similarity">
    <text evidence="1">Belongs to the YajQ family.</text>
</comment>
<feature type="chain" id="PRO_1000082623" description="Nucleotide-binding protein CBUD_1993">
    <location>
        <begin position="1"/>
        <end position="160"/>
    </location>
</feature>
<dbReference type="EMBL" id="CP000733">
    <property type="protein sequence ID" value="ABS76496.1"/>
    <property type="molecule type" value="Genomic_DNA"/>
</dbReference>
<dbReference type="RefSeq" id="WP_005772268.1">
    <property type="nucleotide sequence ID" value="NC_009727.1"/>
</dbReference>
<dbReference type="SMR" id="A9KET4"/>
<dbReference type="KEGG" id="cbd:CBUD_1993"/>
<dbReference type="HOGENOM" id="CLU_099839_1_0_6"/>
<dbReference type="Proteomes" id="UP000008555">
    <property type="component" value="Chromosome"/>
</dbReference>
<dbReference type="GO" id="GO:0005829">
    <property type="term" value="C:cytosol"/>
    <property type="evidence" value="ECO:0007669"/>
    <property type="project" value="TreeGrafter"/>
</dbReference>
<dbReference type="GO" id="GO:0000166">
    <property type="term" value="F:nucleotide binding"/>
    <property type="evidence" value="ECO:0007669"/>
    <property type="project" value="TreeGrafter"/>
</dbReference>
<dbReference type="CDD" id="cd11740">
    <property type="entry name" value="YajQ_like"/>
    <property type="match status" value="1"/>
</dbReference>
<dbReference type="FunFam" id="3.30.70.860:FF:000001">
    <property type="entry name" value="UPF0234 protein YajQ"/>
    <property type="match status" value="1"/>
</dbReference>
<dbReference type="Gene3D" id="3.30.70.860">
    <property type="match status" value="1"/>
</dbReference>
<dbReference type="Gene3D" id="3.30.70.990">
    <property type="entry name" value="YajQ-like, domain 2"/>
    <property type="match status" value="1"/>
</dbReference>
<dbReference type="HAMAP" id="MF_00632">
    <property type="entry name" value="YajQ"/>
    <property type="match status" value="1"/>
</dbReference>
<dbReference type="InterPro" id="IPR007551">
    <property type="entry name" value="DUF520"/>
</dbReference>
<dbReference type="InterPro" id="IPR035571">
    <property type="entry name" value="UPF0234-like_C"/>
</dbReference>
<dbReference type="InterPro" id="IPR035570">
    <property type="entry name" value="UPF0234_N"/>
</dbReference>
<dbReference type="InterPro" id="IPR036183">
    <property type="entry name" value="YajQ-like_sf"/>
</dbReference>
<dbReference type="NCBIfam" id="NF003819">
    <property type="entry name" value="PRK05412.1"/>
    <property type="match status" value="1"/>
</dbReference>
<dbReference type="PANTHER" id="PTHR30476">
    <property type="entry name" value="UPF0234 PROTEIN YAJQ"/>
    <property type="match status" value="1"/>
</dbReference>
<dbReference type="PANTHER" id="PTHR30476:SF0">
    <property type="entry name" value="UPF0234 PROTEIN YAJQ"/>
    <property type="match status" value="1"/>
</dbReference>
<dbReference type="Pfam" id="PF04461">
    <property type="entry name" value="DUF520"/>
    <property type="match status" value="1"/>
</dbReference>
<dbReference type="SUPFAM" id="SSF89963">
    <property type="entry name" value="YajQ-like"/>
    <property type="match status" value="2"/>
</dbReference>
<evidence type="ECO:0000255" key="1">
    <source>
        <dbReference type="HAMAP-Rule" id="MF_00632"/>
    </source>
</evidence>
<organism>
    <name type="scientific">Coxiella burnetii (strain Dugway 5J108-111)</name>
    <dbReference type="NCBI Taxonomy" id="434922"/>
    <lineage>
        <taxon>Bacteria</taxon>
        <taxon>Pseudomonadati</taxon>
        <taxon>Pseudomonadota</taxon>
        <taxon>Gammaproteobacteria</taxon>
        <taxon>Legionellales</taxon>
        <taxon>Coxiellaceae</taxon>
        <taxon>Coxiella</taxon>
    </lineage>
</organism>